<organism>
    <name type="scientific">Arabidopsis thaliana</name>
    <name type="common">Mouse-ear cress</name>
    <dbReference type="NCBI Taxonomy" id="3702"/>
    <lineage>
        <taxon>Eukaryota</taxon>
        <taxon>Viridiplantae</taxon>
        <taxon>Streptophyta</taxon>
        <taxon>Embryophyta</taxon>
        <taxon>Tracheophyta</taxon>
        <taxon>Spermatophyta</taxon>
        <taxon>Magnoliopsida</taxon>
        <taxon>eudicotyledons</taxon>
        <taxon>Gunneridae</taxon>
        <taxon>Pentapetalae</taxon>
        <taxon>rosids</taxon>
        <taxon>malvids</taxon>
        <taxon>Brassicales</taxon>
        <taxon>Brassicaceae</taxon>
        <taxon>Camelineae</taxon>
        <taxon>Arabidopsis</taxon>
    </lineage>
</organism>
<reference key="1">
    <citation type="journal article" date="1999" name="Nature">
        <title>Sequence and analysis of chromosome 2 of the plant Arabidopsis thaliana.</title>
        <authorList>
            <person name="Lin X."/>
            <person name="Kaul S."/>
            <person name="Rounsley S.D."/>
            <person name="Shea T.P."/>
            <person name="Benito M.-I."/>
            <person name="Town C.D."/>
            <person name="Fujii C.Y."/>
            <person name="Mason T.M."/>
            <person name="Bowman C.L."/>
            <person name="Barnstead M.E."/>
            <person name="Feldblyum T.V."/>
            <person name="Buell C.R."/>
            <person name="Ketchum K.A."/>
            <person name="Lee J.J."/>
            <person name="Ronning C.M."/>
            <person name="Koo H.L."/>
            <person name="Moffat K.S."/>
            <person name="Cronin L.A."/>
            <person name="Shen M."/>
            <person name="Pai G."/>
            <person name="Van Aken S."/>
            <person name="Umayam L."/>
            <person name="Tallon L.J."/>
            <person name="Gill J.E."/>
            <person name="Adams M.D."/>
            <person name="Carrera A.J."/>
            <person name="Creasy T.H."/>
            <person name="Goodman H.M."/>
            <person name="Somerville C.R."/>
            <person name="Copenhaver G.P."/>
            <person name="Preuss D."/>
            <person name="Nierman W.C."/>
            <person name="White O."/>
            <person name="Eisen J.A."/>
            <person name="Salzberg S.L."/>
            <person name="Fraser C.M."/>
            <person name="Venter J.C."/>
        </authorList>
    </citation>
    <scope>NUCLEOTIDE SEQUENCE [LARGE SCALE GENOMIC DNA]</scope>
    <source>
        <strain>cv. Columbia</strain>
    </source>
</reference>
<reference key="2">
    <citation type="journal article" date="2017" name="Plant J.">
        <title>Araport11: a complete reannotation of the Arabidopsis thaliana reference genome.</title>
        <authorList>
            <person name="Cheng C.Y."/>
            <person name="Krishnakumar V."/>
            <person name="Chan A.P."/>
            <person name="Thibaud-Nissen F."/>
            <person name="Schobel S."/>
            <person name="Town C.D."/>
        </authorList>
    </citation>
    <scope>GENOME REANNOTATION</scope>
    <source>
        <strain>cv. Columbia</strain>
    </source>
</reference>
<proteinExistence type="inferred from homology"/>
<accession>O80770</accession>
<accession>F4IGX3</accession>
<dbReference type="EMBL" id="AC004481">
    <property type="protein sequence ID" value="AAC27397.1"/>
    <property type="status" value="ALT_SEQ"/>
    <property type="molecule type" value="Genomic_DNA"/>
</dbReference>
<dbReference type="EMBL" id="CP002685">
    <property type="protein sequence ID" value="AEC08936.1"/>
    <property type="molecule type" value="Genomic_DNA"/>
</dbReference>
<dbReference type="PIR" id="T02309">
    <property type="entry name" value="T02309"/>
</dbReference>
<dbReference type="RefSeq" id="NP_180968.2">
    <property type="nucleotide sequence ID" value="NM_128972.2"/>
</dbReference>
<dbReference type="SMR" id="O80770"/>
<dbReference type="FunCoup" id="O80770">
    <property type="interactions" value="4036"/>
</dbReference>
<dbReference type="STRING" id="3702.O80770"/>
<dbReference type="GlyGen" id="O80770">
    <property type="glycosylation" value="3 sites"/>
</dbReference>
<dbReference type="iPTMnet" id="O80770"/>
<dbReference type="PaxDb" id="3702-AT2G34210.1"/>
<dbReference type="ProteomicsDB" id="228317"/>
<dbReference type="EnsemblPlants" id="AT2G34210.1">
    <property type="protein sequence ID" value="AT2G34210.1"/>
    <property type="gene ID" value="AT2G34210"/>
</dbReference>
<dbReference type="GeneID" id="817982"/>
<dbReference type="Gramene" id="AT2G34210.1">
    <property type="protein sequence ID" value="AT2G34210.1"/>
    <property type="gene ID" value="AT2G34210"/>
</dbReference>
<dbReference type="KEGG" id="ath:AT2G34210"/>
<dbReference type="Araport" id="AT2G34210"/>
<dbReference type="TAIR" id="AT2G34210">
    <property type="gene designation" value="SPT5-1"/>
</dbReference>
<dbReference type="eggNOG" id="KOG1999">
    <property type="taxonomic scope" value="Eukaryota"/>
</dbReference>
<dbReference type="HOGENOM" id="CLU_003537_0_1_1"/>
<dbReference type="InParanoid" id="O80770"/>
<dbReference type="OrthoDB" id="28901at2759"/>
<dbReference type="PRO" id="PR:O80770"/>
<dbReference type="Proteomes" id="UP000006548">
    <property type="component" value="Chromosome 2"/>
</dbReference>
<dbReference type="ExpressionAtlas" id="O80770">
    <property type="expression patterns" value="baseline and differential"/>
</dbReference>
<dbReference type="GO" id="GO:0005634">
    <property type="term" value="C:nucleus"/>
    <property type="evidence" value="ECO:0007669"/>
    <property type="project" value="UniProtKB-SubCell"/>
</dbReference>
<dbReference type="GO" id="GO:0005840">
    <property type="term" value="C:ribosome"/>
    <property type="evidence" value="ECO:0007669"/>
    <property type="project" value="InterPro"/>
</dbReference>
<dbReference type="GO" id="GO:0003735">
    <property type="term" value="F:structural constituent of ribosome"/>
    <property type="evidence" value="ECO:0007669"/>
    <property type="project" value="InterPro"/>
</dbReference>
<dbReference type="GO" id="GO:0032784">
    <property type="term" value="P:regulation of DNA-templated transcription elongation"/>
    <property type="evidence" value="ECO:0007669"/>
    <property type="project" value="InterPro"/>
</dbReference>
<dbReference type="GO" id="GO:0006357">
    <property type="term" value="P:regulation of transcription by RNA polymerase II"/>
    <property type="evidence" value="ECO:0007669"/>
    <property type="project" value="InterPro"/>
</dbReference>
<dbReference type="GO" id="GO:0140673">
    <property type="term" value="P:transcription elongation-coupled chromatin remodeling"/>
    <property type="evidence" value="ECO:0007669"/>
    <property type="project" value="InterPro"/>
</dbReference>
<dbReference type="GO" id="GO:0006412">
    <property type="term" value="P:translation"/>
    <property type="evidence" value="ECO:0007669"/>
    <property type="project" value="InterPro"/>
</dbReference>
<dbReference type="CDD" id="cd06081">
    <property type="entry name" value="KOW_Spt5_1"/>
    <property type="match status" value="1"/>
</dbReference>
<dbReference type="CDD" id="cd06082">
    <property type="entry name" value="KOW_Spt5_2"/>
    <property type="match status" value="1"/>
</dbReference>
<dbReference type="CDD" id="cd06083">
    <property type="entry name" value="KOW_Spt5_3"/>
    <property type="match status" value="1"/>
</dbReference>
<dbReference type="CDD" id="cd06084">
    <property type="entry name" value="KOW_Spt5_4"/>
    <property type="match status" value="1"/>
</dbReference>
<dbReference type="CDD" id="cd06086">
    <property type="entry name" value="KOW_Spt5_6"/>
    <property type="match status" value="1"/>
</dbReference>
<dbReference type="CDD" id="cd09888">
    <property type="entry name" value="NGN_Euk"/>
    <property type="match status" value="1"/>
</dbReference>
<dbReference type="FunFam" id="2.30.30.30:FF:000027">
    <property type="entry name" value="Transcription elongation factor SPT5"/>
    <property type="match status" value="1"/>
</dbReference>
<dbReference type="FunFam" id="2.30.30.30:FF:000028">
    <property type="entry name" value="Transcription elongation factor SPT5"/>
    <property type="match status" value="1"/>
</dbReference>
<dbReference type="FunFam" id="2.30.30.30:FF:000043">
    <property type="entry name" value="Transcription elongation factor SPT5"/>
    <property type="match status" value="1"/>
</dbReference>
<dbReference type="FunFam" id="3.30.70.940:FF:000007">
    <property type="entry name" value="Transcription elongation factor SPT5"/>
    <property type="match status" value="1"/>
</dbReference>
<dbReference type="Gene3D" id="2.30.30.30">
    <property type="match status" value="4"/>
</dbReference>
<dbReference type="Gene3D" id="3.30.70.940">
    <property type="entry name" value="NusG, N-terminal domain"/>
    <property type="match status" value="1"/>
</dbReference>
<dbReference type="InterPro" id="IPR005824">
    <property type="entry name" value="KOW"/>
</dbReference>
<dbReference type="InterPro" id="IPR041973">
    <property type="entry name" value="KOW_Spt5_1"/>
</dbReference>
<dbReference type="InterPro" id="IPR041975">
    <property type="entry name" value="KOW_Spt5_2"/>
</dbReference>
<dbReference type="InterPro" id="IPR041976">
    <property type="entry name" value="KOW_Spt5_3"/>
</dbReference>
<dbReference type="InterPro" id="IPR041977">
    <property type="entry name" value="KOW_Spt5_4"/>
</dbReference>
<dbReference type="InterPro" id="IPR041980">
    <property type="entry name" value="KOW_Spt5_6"/>
</dbReference>
<dbReference type="InterPro" id="IPR005100">
    <property type="entry name" value="NGN-domain"/>
</dbReference>
<dbReference type="InterPro" id="IPR006645">
    <property type="entry name" value="NGN-like_dom"/>
</dbReference>
<dbReference type="InterPro" id="IPR036735">
    <property type="entry name" value="NGN_dom_sf"/>
</dbReference>
<dbReference type="InterPro" id="IPR039385">
    <property type="entry name" value="NGN_Euk"/>
</dbReference>
<dbReference type="InterPro" id="IPR014722">
    <property type="entry name" value="Rib_uL2_dom2"/>
</dbReference>
<dbReference type="InterPro" id="IPR005825">
    <property type="entry name" value="Ribosomal_uL24_CS"/>
</dbReference>
<dbReference type="InterPro" id="IPR039659">
    <property type="entry name" value="SPT5"/>
</dbReference>
<dbReference type="InterPro" id="IPR022581">
    <property type="entry name" value="Spt5_N"/>
</dbReference>
<dbReference type="InterPro" id="IPR017071">
    <property type="entry name" value="TF_Spt5_eukaryote"/>
</dbReference>
<dbReference type="InterPro" id="IPR008991">
    <property type="entry name" value="Translation_prot_SH3-like_sf"/>
</dbReference>
<dbReference type="PANTHER" id="PTHR11125">
    <property type="entry name" value="SUPPRESSOR OF TY 5"/>
    <property type="match status" value="1"/>
</dbReference>
<dbReference type="PANTHER" id="PTHR11125:SF17">
    <property type="entry name" value="TRANSCRIPTION ELONGATION FACTOR SPT5 HOMOLOG 2-RELATED"/>
    <property type="match status" value="1"/>
</dbReference>
<dbReference type="Pfam" id="PF00467">
    <property type="entry name" value="KOW"/>
    <property type="match status" value="1"/>
</dbReference>
<dbReference type="Pfam" id="PF23042">
    <property type="entry name" value="KOW1_SPT5"/>
    <property type="match status" value="1"/>
</dbReference>
<dbReference type="Pfam" id="PF23284">
    <property type="entry name" value="KOW2_Spt5"/>
    <property type="match status" value="1"/>
</dbReference>
<dbReference type="Pfam" id="PF23291">
    <property type="entry name" value="KOW4_SPT5"/>
    <property type="match status" value="1"/>
</dbReference>
<dbReference type="Pfam" id="PF23290">
    <property type="entry name" value="KOW5_SPT5"/>
    <property type="match status" value="1"/>
</dbReference>
<dbReference type="Pfam" id="PF23038">
    <property type="entry name" value="KOW6_SPT51-2"/>
    <property type="match status" value="1"/>
</dbReference>
<dbReference type="Pfam" id="PF23287">
    <property type="entry name" value="KOW7_SPT5"/>
    <property type="match status" value="1"/>
</dbReference>
<dbReference type="Pfam" id="PF23037">
    <property type="entry name" value="KOWx_SPT5"/>
    <property type="match status" value="1"/>
</dbReference>
<dbReference type="Pfam" id="PF03439">
    <property type="entry name" value="Spt5-NGN"/>
    <property type="match status" value="1"/>
</dbReference>
<dbReference type="Pfam" id="PF11942">
    <property type="entry name" value="Spt5_N"/>
    <property type="match status" value="1"/>
</dbReference>
<dbReference type="PIRSF" id="PIRSF036945">
    <property type="entry name" value="Spt5"/>
    <property type="match status" value="1"/>
</dbReference>
<dbReference type="SMART" id="SM00739">
    <property type="entry name" value="KOW"/>
    <property type="match status" value="6"/>
</dbReference>
<dbReference type="SMART" id="SM00738">
    <property type="entry name" value="NGN"/>
    <property type="match status" value="1"/>
</dbReference>
<dbReference type="SUPFAM" id="SSF50104">
    <property type="entry name" value="Translation proteins SH3-like domain"/>
    <property type="match status" value="2"/>
</dbReference>
<dbReference type="PROSITE" id="PS01108">
    <property type="entry name" value="RIBOSOMAL_L24"/>
    <property type="match status" value="1"/>
</dbReference>
<feature type="chain" id="PRO_0000208476" description="Putative transcription elongation factor SPT5 homolog 2">
    <location>
        <begin position="1"/>
        <end position="989"/>
    </location>
</feature>
<feature type="domain" description="KOW 1">
    <location>
        <begin position="260"/>
        <end position="287"/>
    </location>
</feature>
<feature type="domain" description="KOW 2">
    <location>
        <begin position="412"/>
        <end position="439"/>
    </location>
</feature>
<feature type="domain" description="KOW 3">
    <location>
        <begin position="464"/>
        <end position="491"/>
    </location>
</feature>
<feature type="domain" description="KOW 4">
    <location>
        <begin position="588"/>
        <end position="615"/>
    </location>
</feature>
<feature type="domain" description="KOW 5">
    <location>
        <begin position="683"/>
        <end position="710"/>
    </location>
</feature>
<feature type="domain" description="KOW 6">
    <location>
        <begin position="936"/>
        <end position="963"/>
    </location>
</feature>
<feature type="region of interest" description="Disordered" evidence="2">
    <location>
        <begin position="1"/>
        <end position="82"/>
    </location>
</feature>
<feature type="region of interest" description="Disordered" evidence="2">
    <location>
        <begin position="790"/>
        <end position="852"/>
    </location>
</feature>
<feature type="compositionally biased region" description="Acidic residues" evidence="2">
    <location>
        <begin position="1"/>
        <end position="26"/>
    </location>
</feature>
<feature type="compositionally biased region" description="Basic residues" evidence="2">
    <location>
        <begin position="31"/>
        <end position="42"/>
    </location>
</feature>
<feature type="compositionally biased region" description="Acidic residues" evidence="2">
    <location>
        <begin position="65"/>
        <end position="82"/>
    </location>
</feature>
<feature type="compositionally biased region" description="Low complexity" evidence="2">
    <location>
        <begin position="842"/>
        <end position="852"/>
    </location>
</feature>
<name>SPT52_ARATH</name>
<comment type="function">
    <text evidence="1">May regulate transcription elongation by RNA polymerase II. May enhance transcriptional pausing at sites proximal to the promoter, which may in turn facilitate the assembly of an elongation competent RNA polymerase II complex (By similarity).</text>
</comment>
<comment type="subcellular location">
    <subcellularLocation>
        <location evidence="1">Nucleus</location>
    </subcellularLocation>
</comment>
<comment type="similarity">
    <text evidence="3">Belongs to the SPT5 family.</text>
</comment>
<comment type="sequence caution" evidence="3">
    <conflict type="erroneous gene model prediction">
        <sequence resource="EMBL-CDS" id="AAC27397"/>
    </conflict>
</comment>
<sequence>MSQYSDDDYSHEDDSEMEDEDEEDEYEPRSSRKGRSGKKRGRSNSDSDGRRGSKKKSSGSAFIDWEVEVDDDVEDDDDDVDVEDGKQQLKFGDFSLCFIVSGEADLPNEDSDHRRQYYQRGFHPHEEDVDELEKRTLERLSTKYAKDDYELDDVNDVDQQALLPSVRDPKLWLVKCAIGREREVAVCLMQKIVDRGSEFKIRSAIALDHLQNYVYIEADMEAHVKEAIKGMRNIYANQKILLVPIKEMTAVLSVESKAIDLSRDSWVRMKLGIYKGDLAQVVDVDNVRKRVTVKLIPRIDLQALANKLEGTENVKKKAFAPPPRFMNIDEARELHIRVEHRRDPMTGDYFENIGGMLFKDGFLYKKVSTKSIAAQNVTPTFDELERFKRPNENGEIDFVDESTLFANRKKGHFMKGDAVIVIKGDLKNLKGWIEKVDEENVLIRSEMKDLPNPIAVNGRELCKYFEPGNFVKVVSGIHEGGTGMIVKVDQHMLIILSDTTKEHICVFADHVAKSAEVTKGVTKIGDYELHDLVILSDFSFGVILKLDSEAIQILKGVPDSSEVSIVKASEIKYKIWKKINVQDRYKNVVAVKDVVRVIEGPSKGKQGPVVQIYKGVLFIHDRHNLEHTGFICTRCSSCVLAGGNFKTPALVPPSPRRFQRADMGYNPGAGGRHQGGRGRRGDDHLVGTYVKIRLGPFKGYSGRLVEVKDKLVRVELEAKIVTVERKAISDMTDNVVATPQYNMGSQTPMHPSRTPLHPCMTPMRHSGATPIHDGMRTPMRGRAWNPYMPMSPPRDNWEDGNPGSWGTSPYEAATPGSDWGSSTPGRSSYRDAGTPINNANAPSPMTPSSTSYLPTTPGGQAMTPGTDLDVMSLDIGGDAETRFIPGILVNVHKAGEDRNPGVIRDVLPDGSCVVALGHRGEGETIRATQNKVSLVCPKKNERVKILGGKYCGSTAKVIGEDGQDGIVKLDESLDIKILKLTILAKLVHE</sequence>
<evidence type="ECO:0000250" key="1"/>
<evidence type="ECO:0000256" key="2">
    <source>
        <dbReference type="SAM" id="MobiDB-lite"/>
    </source>
</evidence>
<evidence type="ECO:0000305" key="3"/>
<gene>
    <name type="ordered locus">At2g34210</name>
    <name type="ORF">F13P17.5</name>
</gene>
<protein>
    <recommendedName>
        <fullName>Putative transcription elongation factor SPT5 homolog 2</fullName>
    </recommendedName>
</protein>
<keyword id="KW-0010">Activator</keyword>
<keyword id="KW-0539">Nucleus</keyword>
<keyword id="KW-1185">Reference proteome</keyword>
<keyword id="KW-0677">Repeat</keyword>
<keyword id="KW-0678">Repressor</keyword>
<keyword id="KW-0804">Transcription</keyword>
<keyword id="KW-0805">Transcription regulation</keyword>